<keyword id="KW-0002">3D-structure</keyword>
<keyword id="KW-0030">Aminoacyl-tRNA synthetase</keyword>
<keyword id="KW-0067">ATP-binding</keyword>
<keyword id="KW-0963">Cytoplasm</keyword>
<keyword id="KW-0436">Ligase</keyword>
<keyword id="KW-0460">Magnesium</keyword>
<keyword id="KW-0479">Metal-binding</keyword>
<keyword id="KW-0547">Nucleotide-binding</keyword>
<keyword id="KW-0648">Protein biosynthesis</keyword>
<comment type="catalytic activity">
    <reaction>
        <text>tRNA(Lys) + L-lysine + ATP = L-lysyl-tRNA(Lys) + AMP + diphosphate</text>
        <dbReference type="Rhea" id="RHEA:20792"/>
        <dbReference type="Rhea" id="RHEA-COMP:9696"/>
        <dbReference type="Rhea" id="RHEA-COMP:9697"/>
        <dbReference type="ChEBI" id="CHEBI:30616"/>
        <dbReference type="ChEBI" id="CHEBI:32551"/>
        <dbReference type="ChEBI" id="CHEBI:33019"/>
        <dbReference type="ChEBI" id="CHEBI:78442"/>
        <dbReference type="ChEBI" id="CHEBI:78529"/>
        <dbReference type="ChEBI" id="CHEBI:456215"/>
        <dbReference type="EC" id="6.1.1.6"/>
    </reaction>
</comment>
<comment type="cofactor">
    <cofactor evidence="1">
        <name>Mg(2+)</name>
        <dbReference type="ChEBI" id="CHEBI:18420"/>
    </cofactor>
    <text evidence="1">Binds 3 Mg(2+) ions per subunit.</text>
</comment>
<comment type="subunit">
    <text evidence="1">Homodimer.</text>
</comment>
<comment type="subcellular location">
    <subcellularLocation>
        <location evidence="1">Cytoplasm</location>
    </subcellularLocation>
</comment>
<comment type="similarity">
    <text evidence="2">Belongs to the class-II aminoacyl-tRNA synthetase family.</text>
</comment>
<organism>
    <name type="scientific">Geobacillus stearothermophilus</name>
    <name type="common">Bacillus stearothermophilus</name>
    <dbReference type="NCBI Taxonomy" id="1422"/>
    <lineage>
        <taxon>Bacteria</taxon>
        <taxon>Bacillati</taxon>
        <taxon>Bacillota</taxon>
        <taxon>Bacilli</taxon>
        <taxon>Bacillales</taxon>
        <taxon>Anoxybacillaceae</taxon>
        <taxon>Geobacillus</taxon>
    </lineage>
</organism>
<name>SYK_GEOSE</name>
<protein>
    <recommendedName>
        <fullName>Lysine--tRNA ligase</fullName>
        <ecNumber>6.1.1.6</ecNumber>
    </recommendedName>
    <alternativeName>
        <fullName>Lysyl-tRNA synthetase</fullName>
        <shortName>LysRS</shortName>
    </alternativeName>
</protein>
<sequence length="494" mass="57406">MSHEELNDQLRVRREKLKKIEELGVDPFGKRFERTHKAEELFELYGDLSKEELEEQQIEVAVAGRIMTKRGMGKAGFAHIQDVTGQIQIYVRQDDVGEQQYELFKISDLGDIVGVRGTMFKTKVGELSIKVSSYEFLTKALRPLPEKYHGLKDIEQRYRQRYLDLIMNPESKKTFITRSLIIQSMRRYLDSHGYLEVETPMMHAVAGGAAARPFITHHNALDMTLYMRIAIELHLKRLIVGGLEKVYEIGRVFRNEGISTRHNPEFTMLELYEAYADFRDIMKLTENLIAHIATEVLGTTKIQYGEHLVDLTPEWRRLHMVDAIKEYVGVDFWRQMSDEEARELAKEHGVEVAPHMTFGHIVNEFFEQKVEDKLIQPTFIYGHPVEISPLAKKNPDDPRFTDRFELFIVGREHANAFTELNDPIDQRQRFEEQLKEREQGNDEAHEMDEDFLEALEYGMPPTGGLGIGVDRLVMLLTNSPSIRDVLLFPQMRHK</sequence>
<reference key="1">
    <citation type="journal article" date="2000" name="Biosci. Biotechnol. Biochem.">
        <title>Lysyl-tRNA synthetase of Bacillus stearothermophilus molecular cloning and expression of the gene.</title>
        <authorList>
            <person name="Takita T."/>
            <person name="Shimizu N."/>
            <person name="Sukata T."/>
            <person name="Hashimoto S."/>
            <person name="Akita E."/>
            <person name="Yokota T."/>
            <person name="Esaki N."/>
            <person name="Soda K."/>
            <person name="Inouye K."/>
            <person name="Tonomura B."/>
        </authorList>
    </citation>
    <scope>NUCLEOTIDE SEQUENCE [GENOMIC DNA]</scope>
    <source>
        <strain>ATCC 29609 / DSM 2027 / NCA 1503 / NCIMB 8924</strain>
    </source>
</reference>
<accession>Q9RHV9</accession>
<gene>
    <name type="primary">lysS</name>
</gene>
<evidence type="ECO:0000250" key="1"/>
<evidence type="ECO:0000305" key="2"/>
<evidence type="ECO:0007829" key="3">
    <source>
        <dbReference type="PDB" id="3A74"/>
    </source>
</evidence>
<feature type="chain" id="PRO_0000152599" description="Lysine--tRNA ligase">
    <location>
        <begin position="1"/>
        <end position="494"/>
    </location>
</feature>
<feature type="binding site" evidence="1">
    <location>
        <position position="405"/>
    </location>
    <ligand>
        <name>Mg(2+)</name>
        <dbReference type="ChEBI" id="CHEBI:18420"/>
        <label>1</label>
    </ligand>
</feature>
<feature type="binding site" evidence="1">
    <location>
        <position position="412"/>
    </location>
    <ligand>
        <name>Mg(2+)</name>
        <dbReference type="ChEBI" id="CHEBI:18420"/>
        <label>1</label>
    </ligand>
</feature>
<feature type="binding site" evidence="1">
    <location>
        <position position="412"/>
    </location>
    <ligand>
        <name>Mg(2+)</name>
        <dbReference type="ChEBI" id="CHEBI:18420"/>
        <label>2</label>
    </ligand>
</feature>
<feature type="helix" evidence="3">
    <location>
        <begin position="8"/>
        <end position="22"/>
    </location>
</feature>
<feature type="helix" evidence="3">
    <location>
        <begin position="38"/>
        <end position="45"/>
    </location>
</feature>
<feature type="helix" evidence="3">
    <location>
        <begin position="50"/>
        <end position="56"/>
    </location>
</feature>
<feature type="strand" evidence="3">
    <location>
        <begin position="59"/>
        <end position="72"/>
    </location>
</feature>
<feature type="strand" evidence="3">
    <location>
        <begin position="75"/>
        <end position="82"/>
    </location>
</feature>
<feature type="strand" evidence="3">
    <location>
        <begin position="85"/>
        <end position="92"/>
    </location>
</feature>
<feature type="helix" evidence="3">
    <location>
        <begin position="93"/>
        <end position="106"/>
    </location>
</feature>
<feature type="strand" evidence="3">
    <location>
        <begin position="112"/>
        <end position="121"/>
    </location>
</feature>
<feature type="strand" evidence="3">
    <location>
        <begin position="127"/>
        <end position="138"/>
    </location>
</feature>
<feature type="helix" evidence="3">
    <location>
        <begin position="154"/>
        <end position="159"/>
    </location>
</feature>
<feature type="helix" evidence="3">
    <location>
        <begin position="161"/>
        <end position="167"/>
    </location>
</feature>
<feature type="helix" evidence="3">
    <location>
        <begin position="170"/>
        <end position="191"/>
    </location>
</feature>
<feature type="strand" evidence="3">
    <location>
        <begin position="201"/>
        <end position="205"/>
    </location>
</feature>
<feature type="strand" evidence="3">
    <location>
        <begin position="208"/>
        <end position="211"/>
    </location>
</feature>
<feature type="strand" evidence="3">
    <location>
        <begin position="215"/>
        <end position="218"/>
    </location>
</feature>
<feature type="turn" evidence="3">
    <location>
        <begin position="219"/>
        <end position="222"/>
    </location>
</feature>
<feature type="strand" evidence="3">
    <location>
        <begin position="223"/>
        <end position="227"/>
    </location>
</feature>
<feature type="helix" evidence="3">
    <location>
        <begin position="232"/>
        <end position="240"/>
    </location>
</feature>
<feature type="strand" evidence="3">
    <location>
        <begin position="245"/>
        <end position="253"/>
    </location>
</feature>
<feature type="strand" evidence="3">
    <location>
        <begin position="264"/>
        <end position="274"/>
    </location>
</feature>
<feature type="helix" evidence="3">
    <location>
        <begin position="278"/>
        <end position="297"/>
    </location>
</feature>
<feature type="strand" evidence="3">
    <location>
        <begin position="300"/>
        <end position="304"/>
    </location>
</feature>
<feature type="strand" evidence="3">
    <location>
        <begin position="307"/>
        <end position="310"/>
    </location>
</feature>
<feature type="strand" evidence="3">
    <location>
        <begin position="316"/>
        <end position="319"/>
    </location>
</feature>
<feature type="helix" evidence="3">
    <location>
        <begin position="320"/>
        <end position="327"/>
    </location>
</feature>
<feature type="helix" evidence="3">
    <location>
        <begin position="338"/>
        <end position="347"/>
    </location>
</feature>
<feature type="helix" evidence="3">
    <location>
        <begin position="358"/>
        <end position="369"/>
    </location>
</feature>
<feature type="helix" evidence="3">
    <location>
        <begin position="371"/>
        <end position="373"/>
    </location>
</feature>
<feature type="strand" evidence="3">
    <location>
        <begin position="378"/>
        <end position="381"/>
    </location>
</feature>
<feature type="helix" evidence="3">
    <location>
        <begin position="385"/>
        <end position="387"/>
    </location>
</feature>
<feature type="strand" evidence="3">
    <location>
        <begin position="400"/>
        <end position="408"/>
    </location>
</feature>
<feature type="strand" evidence="3">
    <location>
        <begin position="411"/>
        <end position="419"/>
    </location>
</feature>
<feature type="helix" evidence="3">
    <location>
        <begin position="423"/>
        <end position="438"/>
    </location>
</feature>
<feature type="helix" evidence="3">
    <location>
        <begin position="449"/>
        <end position="456"/>
    </location>
</feature>
<feature type="strand" evidence="3">
    <location>
        <begin position="461"/>
        <end position="468"/>
    </location>
</feature>
<feature type="helix" evidence="3">
    <location>
        <begin position="469"/>
        <end position="476"/>
    </location>
</feature>
<feature type="helix" evidence="3">
    <location>
        <begin position="482"/>
        <end position="484"/>
    </location>
</feature>
<feature type="strand" evidence="3">
    <location>
        <begin position="486"/>
        <end position="488"/>
    </location>
</feature>
<dbReference type="EC" id="6.1.1.6"/>
<dbReference type="EMBL" id="AB012100">
    <property type="protein sequence ID" value="BAA88691.1"/>
    <property type="molecule type" value="Genomic_DNA"/>
</dbReference>
<dbReference type="PIR" id="JC7205">
    <property type="entry name" value="JC7205"/>
</dbReference>
<dbReference type="PDB" id="3A74">
    <property type="method" value="X-ray"/>
    <property type="resolution" value="1.80 A"/>
    <property type="chains" value="A/B/C/D=2-494"/>
</dbReference>
<dbReference type="PDB" id="3E9H">
    <property type="method" value="X-ray"/>
    <property type="resolution" value="2.10 A"/>
    <property type="chains" value="A/B/C/D=2-494"/>
</dbReference>
<dbReference type="PDB" id="3E9I">
    <property type="method" value="X-ray"/>
    <property type="resolution" value="2.20 A"/>
    <property type="chains" value="A/B/C/D=2-494"/>
</dbReference>
<dbReference type="PDBsum" id="3A74"/>
<dbReference type="PDBsum" id="3E9H"/>
<dbReference type="PDBsum" id="3E9I"/>
<dbReference type="SMR" id="Q9RHV9"/>
<dbReference type="BRENDA" id="6.1.1.6">
    <property type="organism ID" value="623"/>
</dbReference>
<dbReference type="EvolutionaryTrace" id="Q9RHV9"/>
<dbReference type="GO" id="GO:0005829">
    <property type="term" value="C:cytosol"/>
    <property type="evidence" value="ECO:0007669"/>
    <property type="project" value="TreeGrafter"/>
</dbReference>
<dbReference type="GO" id="GO:0005524">
    <property type="term" value="F:ATP binding"/>
    <property type="evidence" value="ECO:0007669"/>
    <property type="project" value="UniProtKB-UniRule"/>
</dbReference>
<dbReference type="GO" id="GO:0140096">
    <property type="term" value="F:catalytic activity, acting on a protein"/>
    <property type="evidence" value="ECO:0007669"/>
    <property type="project" value="UniProtKB-ARBA"/>
</dbReference>
<dbReference type="GO" id="GO:0004824">
    <property type="term" value="F:lysine-tRNA ligase activity"/>
    <property type="evidence" value="ECO:0007669"/>
    <property type="project" value="UniProtKB-UniRule"/>
</dbReference>
<dbReference type="GO" id="GO:0000287">
    <property type="term" value="F:magnesium ion binding"/>
    <property type="evidence" value="ECO:0007669"/>
    <property type="project" value="UniProtKB-UniRule"/>
</dbReference>
<dbReference type="GO" id="GO:0016740">
    <property type="term" value="F:transferase activity"/>
    <property type="evidence" value="ECO:0007669"/>
    <property type="project" value="UniProtKB-ARBA"/>
</dbReference>
<dbReference type="GO" id="GO:0000049">
    <property type="term" value="F:tRNA binding"/>
    <property type="evidence" value="ECO:0007669"/>
    <property type="project" value="TreeGrafter"/>
</dbReference>
<dbReference type="GO" id="GO:0006430">
    <property type="term" value="P:lysyl-tRNA aminoacylation"/>
    <property type="evidence" value="ECO:0007669"/>
    <property type="project" value="UniProtKB-UniRule"/>
</dbReference>
<dbReference type="CDD" id="cd00775">
    <property type="entry name" value="LysRS_core"/>
    <property type="match status" value="1"/>
</dbReference>
<dbReference type="CDD" id="cd04322">
    <property type="entry name" value="LysRS_N"/>
    <property type="match status" value="1"/>
</dbReference>
<dbReference type="FunFam" id="2.40.50.140:FF:000024">
    <property type="entry name" value="Lysine--tRNA ligase"/>
    <property type="match status" value="1"/>
</dbReference>
<dbReference type="FunFam" id="3.30.930.10:FF:000001">
    <property type="entry name" value="Lysine--tRNA ligase"/>
    <property type="match status" value="1"/>
</dbReference>
<dbReference type="Gene3D" id="3.30.930.10">
    <property type="entry name" value="Bira Bifunctional Protein, Domain 2"/>
    <property type="match status" value="1"/>
</dbReference>
<dbReference type="Gene3D" id="2.40.50.140">
    <property type="entry name" value="Nucleic acid-binding proteins"/>
    <property type="match status" value="1"/>
</dbReference>
<dbReference type="HAMAP" id="MF_00252">
    <property type="entry name" value="Lys_tRNA_synth_class2"/>
    <property type="match status" value="1"/>
</dbReference>
<dbReference type="InterPro" id="IPR004364">
    <property type="entry name" value="Aa-tRNA-synt_II"/>
</dbReference>
<dbReference type="InterPro" id="IPR006195">
    <property type="entry name" value="aa-tRNA-synth_II"/>
</dbReference>
<dbReference type="InterPro" id="IPR045864">
    <property type="entry name" value="aa-tRNA-synth_II/BPL/LPL"/>
</dbReference>
<dbReference type="InterPro" id="IPR002313">
    <property type="entry name" value="Lys-tRNA-ligase_II"/>
</dbReference>
<dbReference type="InterPro" id="IPR034762">
    <property type="entry name" value="Lys-tRNA-ligase_II_bac/euk"/>
</dbReference>
<dbReference type="InterPro" id="IPR044136">
    <property type="entry name" value="Lys-tRNA-ligase_II_N"/>
</dbReference>
<dbReference type="InterPro" id="IPR018149">
    <property type="entry name" value="Lys-tRNA-synth_II_C"/>
</dbReference>
<dbReference type="InterPro" id="IPR012340">
    <property type="entry name" value="NA-bd_OB-fold"/>
</dbReference>
<dbReference type="InterPro" id="IPR004365">
    <property type="entry name" value="NA-bd_OB_tRNA"/>
</dbReference>
<dbReference type="NCBIfam" id="TIGR00499">
    <property type="entry name" value="lysS_bact"/>
    <property type="match status" value="1"/>
</dbReference>
<dbReference type="NCBIfam" id="NF001756">
    <property type="entry name" value="PRK00484.1"/>
    <property type="match status" value="1"/>
</dbReference>
<dbReference type="PANTHER" id="PTHR42918:SF15">
    <property type="entry name" value="LYSINE--TRNA LIGASE, CHLOROPLASTIC_MITOCHONDRIAL"/>
    <property type="match status" value="1"/>
</dbReference>
<dbReference type="PANTHER" id="PTHR42918">
    <property type="entry name" value="LYSYL-TRNA SYNTHETASE"/>
    <property type="match status" value="1"/>
</dbReference>
<dbReference type="Pfam" id="PF00152">
    <property type="entry name" value="tRNA-synt_2"/>
    <property type="match status" value="1"/>
</dbReference>
<dbReference type="Pfam" id="PF01336">
    <property type="entry name" value="tRNA_anti-codon"/>
    <property type="match status" value="1"/>
</dbReference>
<dbReference type="PIRSF" id="PIRSF039101">
    <property type="entry name" value="LysRS2"/>
    <property type="match status" value="1"/>
</dbReference>
<dbReference type="PRINTS" id="PR00982">
    <property type="entry name" value="TRNASYNTHLYS"/>
</dbReference>
<dbReference type="SUPFAM" id="SSF55681">
    <property type="entry name" value="Class II aaRS and biotin synthetases"/>
    <property type="match status" value="1"/>
</dbReference>
<dbReference type="SUPFAM" id="SSF50249">
    <property type="entry name" value="Nucleic acid-binding proteins"/>
    <property type="match status" value="1"/>
</dbReference>
<dbReference type="PROSITE" id="PS50862">
    <property type="entry name" value="AA_TRNA_LIGASE_II"/>
    <property type="match status" value="1"/>
</dbReference>
<proteinExistence type="evidence at protein level"/>